<proteinExistence type="inferred from homology"/>
<protein>
    <recommendedName>
        <fullName evidence="1">Phosphomethylpyrimidine synthase</fullName>
        <ecNumber evidence="1">4.1.99.17</ecNumber>
    </recommendedName>
    <alternativeName>
        <fullName evidence="1">Hydroxymethylpyrimidine phosphate synthase</fullName>
        <shortName evidence="1">HMP-P synthase</shortName>
        <shortName evidence="1">HMP-phosphate synthase</shortName>
        <shortName evidence="1">HMPP synthase</shortName>
    </alternativeName>
    <alternativeName>
        <fullName evidence="1">Thiamine biosynthesis protein ThiC</fullName>
    </alternativeName>
</protein>
<organism>
    <name type="scientific">Escherichia coli O45:K1 (strain S88 / ExPEC)</name>
    <dbReference type="NCBI Taxonomy" id="585035"/>
    <lineage>
        <taxon>Bacteria</taxon>
        <taxon>Pseudomonadati</taxon>
        <taxon>Pseudomonadota</taxon>
        <taxon>Gammaproteobacteria</taxon>
        <taxon>Enterobacterales</taxon>
        <taxon>Enterobacteriaceae</taxon>
        <taxon>Escherichia</taxon>
    </lineage>
</organism>
<keyword id="KW-0004">4Fe-4S</keyword>
<keyword id="KW-0408">Iron</keyword>
<keyword id="KW-0411">Iron-sulfur</keyword>
<keyword id="KW-0456">Lyase</keyword>
<keyword id="KW-0479">Metal-binding</keyword>
<keyword id="KW-1185">Reference proteome</keyword>
<keyword id="KW-0949">S-adenosyl-L-methionine</keyword>
<keyword id="KW-0784">Thiamine biosynthesis</keyword>
<keyword id="KW-0862">Zinc</keyword>
<evidence type="ECO:0000255" key="1">
    <source>
        <dbReference type="HAMAP-Rule" id="MF_00089"/>
    </source>
</evidence>
<comment type="function">
    <text evidence="1">Catalyzes the synthesis of the hydroxymethylpyrimidine phosphate (HMP-P) moiety of thiamine from aminoimidazole ribotide (AIR) in a radical S-adenosyl-L-methionine (SAM)-dependent reaction.</text>
</comment>
<comment type="catalytic activity">
    <reaction evidence="1">
        <text>5-amino-1-(5-phospho-beta-D-ribosyl)imidazole + S-adenosyl-L-methionine = 4-amino-2-methyl-5-(phosphooxymethyl)pyrimidine + CO + 5'-deoxyadenosine + formate + L-methionine + 3 H(+)</text>
        <dbReference type="Rhea" id="RHEA:24840"/>
        <dbReference type="ChEBI" id="CHEBI:15378"/>
        <dbReference type="ChEBI" id="CHEBI:15740"/>
        <dbReference type="ChEBI" id="CHEBI:17245"/>
        <dbReference type="ChEBI" id="CHEBI:17319"/>
        <dbReference type="ChEBI" id="CHEBI:57844"/>
        <dbReference type="ChEBI" id="CHEBI:58354"/>
        <dbReference type="ChEBI" id="CHEBI:59789"/>
        <dbReference type="ChEBI" id="CHEBI:137981"/>
        <dbReference type="EC" id="4.1.99.17"/>
    </reaction>
</comment>
<comment type="cofactor">
    <cofactor evidence="1">
        <name>[4Fe-4S] cluster</name>
        <dbReference type="ChEBI" id="CHEBI:49883"/>
    </cofactor>
    <text evidence="1">Binds 1 [4Fe-4S] cluster per subunit. The cluster is coordinated with 3 cysteines and an exchangeable S-adenosyl-L-methionine.</text>
</comment>
<comment type="pathway">
    <text evidence="1">Cofactor biosynthesis; thiamine diphosphate biosynthesis.</text>
</comment>
<comment type="subunit">
    <text evidence="1">Homodimer.</text>
</comment>
<comment type="similarity">
    <text evidence="1">Belongs to the ThiC family.</text>
</comment>
<name>THIC_ECO45</name>
<accession>B7MIY0</accession>
<dbReference type="EC" id="4.1.99.17" evidence="1"/>
<dbReference type="EMBL" id="CU928161">
    <property type="protein sequence ID" value="CAR05624.1"/>
    <property type="molecule type" value="Genomic_DNA"/>
</dbReference>
<dbReference type="RefSeq" id="WP_001331778.1">
    <property type="nucleotide sequence ID" value="NC_011742.1"/>
</dbReference>
<dbReference type="SMR" id="B7MIY0"/>
<dbReference type="KEGG" id="ecz:ECS88_4455"/>
<dbReference type="HOGENOM" id="CLU_013181_2_1_6"/>
<dbReference type="UniPathway" id="UPA00060"/>
<dbReference type="Proteomes" id="UP000000747">
    <property type="component" value="Chromosome"/>
</dbReference>
<dbReference type="GO" id="GO:0005829">
    <property type="term" value="C:cytosol"/>
    <property type="evidence" value="ECO:0007669"/>
    <property type="project" value="TreeGrafter"/>
</dbReference>
<dbReference type="GO" id="GO:0051539">
    <property type="term" value="F:4 iron, 4 sulfur cluster binding"/>
    <property type="evidence" value="ECO:0007669"/>
    <property type="project" value="UniProtKB-KW"/>
</dbReference>
<dbReference type="GO" id="GO:0016830">
    <property type="term" value="F:carbon-carbon lyase activity"/>
    <property type="evidence" value="ECO:0007669"/>
    <property type="project" value="InterPro"/>
</dbReference>
<dbReference type="GO" id="GO:0008270">
    <property type="term" value="F:zinc ion binding"/>
    <property type="evidence" value="ECO:0007669"/>
    <property type="project" value="UniProtKB-UniRule"/>
</dbReference>
<dbReference type="GO" id="GO:0009228">
    <property type="term" value="P:thiamine biosynthetic process"/>
    <property type="evidence" value="ECO:0007669"/>
    <property type="project" value="UniProtKB-KW"/>
</dbReference>
<dbReference type="GO" id="GO:0009229">
    <property type="term" value="P:thiamine diphosphate biosynthetic process"/>
    <property type="evidence" value="ECO:0007669"/>
    <property type="project" value="UniProtKB-UniRule"/>
</dbReference>
<dbReference type="FunFam" id="3.20.20.540:FF:000001">
    <property type="entry name" value="Phosphomethylpyrimidine synthase"/>
    <property type="match status" value="1"/>
</dbReference>
<dbReference type="Gene3D" id="6.10.250.620">
    <property type="match status" value="1"/>
</dbReference>
<dbReference type="Gene3D" id="3.20.20.540">
    <property type="entry name" value="Radical SAM ThiC family, central domain"/>
    <property type="match status" value="1"/>
</dbReference>
<dbReference type="HAMAP" id="MF_00089">
    <property type="entry name" value="ThiC"/>
    <property type="match status" value="1"/>
</dbReference>
<dbReference type="InterPro" id="IPR037509">
    <property type="entry name" value="ThiC"/>
</dbReference>
<dbReference type="InterPro" id="IPR025747">
    <property type="entry name" value="ThiC-associated_dom"/>
</dbReference>
<dbReference type="InterPro" id="IPR038521">
    <property type="entry name" value="ThiC/Bza_core_dom"/>
</dbReference>
<dbReference type="InterPro" id="IPR002817">
    <property type="entry name" value="ThiC/BzaA/B"/>
</dbReference>
<dbReference type="NCBIfam" id="NF006763">
    <property type="entry name" value="PRK09284.1"/>
    <property type="match status" value="1"/>
</dbReference>
<dbReference type="NCBIfam" id="NF009895">
    <property type="entry name" value="PRK13352.1"/>
    <property type="match status" value="1"/>
</dbReference>
<dbReference type="NCBIfam" id="TIGR00190">
    <property type="entry name" value="thiC"/>
    <property type="match status" value="1"/>
</dbReference>
<dbReference type="PANTHER" id="PTHR30557:SF1">
    <property type="entry name" value="PHOSPHOMETHYLPYRIMIDINE SYNTHASE, CHLOROPLASTIC"/>
    <property type="match status" value="1"/>
</dbReference>
<dbReference type="PANTHER" id="PTHR30557">
    <property type="entry name" value="THIAMINE BIOSYNTHESIS PROTEIN THIC"/>
    <property type="match status" value="1"/>
</dbReference>
<dbReference type="Pfam" id="PF13667">
    <property type="entry name" value="ThiC-associated"/>
    <property type="match status" value="1"/>
</dbReference>
<dbReference type="Pfam" id="PF01964">
    <property type="entry name" value="ThiC_Rad_SAM"/>
    <property type="match status" value="1"/>
</dbReference>
<dbReference type="SFLD" id="SFLDF00407">
    <property type="entry name" value="phosphomethylpyrimidine_syntha"/>
    <property type="match status" value="1"/>
</dbReference>
<dbReference type="SFLD" id="SFLDG01114">
    <property type="entry name" value="phosphomethylpyrimidine_syntha"/>
    <property type="match status" value="1"/>
</dbReference>
<dbReference type="SFLD" id="SFLDS00113">
    <property type="entry name" value="Radical_SAM_Phosphomethylpyrim"/>
    <property type="match status" value="1"/>
</dbReference>
<feature type="chain" id="PRO_1000198055" description="Phosphomethylpyrimidine synthase">
    <location>
        <begin position="1"/>
        <end position="631"/>
    </location>
</feature>
<feature type="binding site" evidence="1">
    <location>
        <position position="239"/>
    </location>
    <ligand>
        <name>substrate</name>
    </ligand>
</feature>
<feature type="binding site" evidence="1">
    <location>
        <position position="268"/>
    </location>
    <ligand>
        <name>substrate</name>
    </ligand>
</feature>
<feature type="binding site" evidence="1">
    <location>
        <position position="297"/>
    </location>
    <ligand>
        <name>substrate</name>
    </ligand>
</feature>
<feature type="binding site" evidence="1">
    <location>
        <position position="333"/>
    </location>
    <ligand>
        <name>substrate</name>
    </ligand>
</feature>
<feature type="binding site" evidence="1">
    <location>
        <begin position="353"/>
        <end position="355"/>
    </location>
    <ligand>
        <name>substrate</name>
    </ligand>
</feature>
<feature type="binding site" evidence="1">
    <location>
        <begin position="394"/>
        <end position="397"/>
    </location>
    <ligand>
        <name>substrate</name>
    </ligand>
</feature>
<feature type="binding site" evidence="1">
    <location>
        <position position="433"/>
    </location>
    <ligand>
        <name>substrate</name>
    </ligand>
</feature>
<feature type="binding site" evidence="1">
    <location>
        <position position="437"/>
    </location>
    <ligand>
        <name>Zn(2+)</name>
        <dbReference type="ChEBI" id="CHEBI:29105"/>
    </ligand>
</feature>
<feature type="binding site" evidence="1">
    <location>
        <position position="460"/>
    </location>
    <ligand>
        <name>substrate</name>
    </ligand>
</feature>
<feature type="binding site" evidence="1">
    <location>
        <position position="501"/>
    </location>
    <ligand>
        <name>Zn(2+)</name>
        <dbReference type="ChEBI" id="CHEBI:29105"/>
    </ligand>
</feature>
<feature type="binding site" evidence="1">
    <location>
        <position position="581"/>
    </location>
    <ligand>
        <name>[4Fe-4S] cluster</name>
        <dbReference type="ChEBI" id="CHEBI:49883"/>
        <note>4Fe-4S-S-AdoMet</note>
    </ligand>
</feature>
<feature type="binding site" evidence="1">
    <location>
        <position position="584"/>
    </location>
    <ligand>
        <name>[4Fe-4S] cluster</name>
        <dbReference type="ChEBI" id="CHEBI:49883"/>
        <note>4Fe-4S-S-AdoMet</note>
    </ligand>
</feature>
<feature type="binding site" evidence="1">
    <location>
        <position position="589"/>
    </location>
    <ligand>
        <name>[4Fe-4S] cluster</name>
        <dbReference type="ChEBI" id="CHEBI:49883"/>
        <note>4Fe-4S-S-AdoMet</note>
    </ligand>
</feature>
<reference key="1">
    <citation type="journal article" date="2009" name="PLoS Genet.">
        <title>Organised genome dynamics in the Escherichia coli species results in highly diverse adaptive paths.</title>
        <authorList>
            <person name="Touchon M."/>
            <person name="Hoede C."/>
            <person name="Tenaillon O."/>
            <person name="Barbe V."/>
            <person name="Baeriswyl S."/>
            <person name="Bidet P."/>
            <person name="Bingen E."/>
            <person name="Bonacorsi S."/>
            <person name="Bouchier C."/>
            <person name="Bouvet O."/>
            <person name="Calteau A."/>
            <person name="Chiapello H."/>
            <person name="Clermont O."/>
            <person name="Cruveiller S."/>
            <person name="Danchin A."/>
            <person name="Diard M."/>
            <person name="Dossat C."/>
            <person name="Karoui M.E."/>
            <person name="Frapy E."/>
            <person name="Garry L."/>
            <person name="Ghigo J.M."/>
            <person name="Gilles A.M."/>
            <person name="Johnson J."/>
            <person name="Le Bouguenec C."/>
            <person name="Lescat M."/>
            <person name="Mangenot S."/>
            <person name="Martinez-Jehanne V."/>
            <person name="Matic I."/>
            <person name="Nassif X."/>
            <person name="Oztas S."/>
            <person name="Petit M.A."/>
            <person name="Pichon C."/>
            <person name="Rouy Z."/>
            <person name="Ruf C.S."/>
            <person name="Schneider D."/>
            <person name="Tourret J."/>
            <person name="Vacherie B."/>
            <person name="Vallenet D."/>
            <person name="Medigue C."/>
            <person name="Rocha E.P.C."/>
            <person name="Denamur E."/>
        </authorList>
    </citation>
    <scope>NUCLEOTIDE SEQUENCE [LARGE SCALE GENOMIC DNA]</scope>
    <source>
        <strain>S88 / ExPEC</strain>
    </source>
</reference>
<sequence length="631" mass="70793">MSATKLTRREQRAQAQHFIDTLEGSAFPNSKRIYITGTHPGVRVPMREIQLSPTLIGGSKEQPQYEENEAIPVYDTSGPYGDPQIAINVQQGLAKLRQPWIDARGDTEELTVRSSDYTKARLADDGLDELRFSGVLTPKRAKAGHRVTQLHYARKGIITPEMEFIAIRENMGRERIRSEVLRHQHPGMSFGARLPENITAEFVRDEVAAGRAIIPANINHPESEPMIIGRNFLVKVNANIGNSAVTSSIEEEVEKLVWSTRWGADTVMDLSTGRYIHETREWILRNSPVPIGTVPIYQALEKVNGIAEDLTWEVFRDTLLEQAEQGVDYFTIHAGVLLRYVPMTAKRLTGIVSRGGSIMAKWCLSHHQENFLYQRFREICEICAAYDVSLSLGDGLRPGSIQDANDEAQFAELHTLGELTKIAWEYDVQVMIEGPGHVPMQMIRRNMTEELEHCHEAPFYTLGPLTTDIAPGYDHFTSGIGAAMIGWFGCAMLCYVTPKEHLGLPNKEDVKQGLITYKIAAHAADLAKGHPGAQIRDNAMSKARFEFRWEDQFNLALDPFTARAYHDETLPQESGKVAHFCSMCGPKFCSMKISQEVRDYAAAQTIEVGMADMSENFRARGGEIYLRKEEA</sequence>
<gene>
    <name evidence="1" type="primary">thiC</name>
    <name type="ordered locus">ECS88_4455</name>
</gene>